<comment type="catalytic activity">
    <reaction evidence="1">
        <text>2-(N(omega)-L-arginino)succinate = fumarate + L-arginine</text>
        <dbReference type="Rhea" id="RHEA:24020"/>
        <dbReference type="ChEBI" id="CHEBI:29806"/>
        <dbReference type="ChEBI" id="CHEBI:32682"/>
        <dbReference type="ChEBI" id="CHEBI:57472"/>
        <dbReference type="EC" id="4.3.2.1"/>
    </reaction>
</comment>
<comment type="pathway">
    <text evidence="1">Amino-acid biosynthesis; L-arginine biosynthesis; L-arginine from L-ornithine and carbamoyl phosphate: step 3/3.</text>
</comment>
<comment type="subcellular location">
    <subcellularLocation>
        <location evidence="1">Cytoplasm</location>
    </subcellularLocation>
</comment>
<comment type="similarity">
    <text evidence="1">Belongs to the lyase 1 family. Argininosuccinate lyase subfamily.</text>
</comment>
<organism>
    <name type="scientific">Bifidobacterium longum (strain DJO10A)</name>
    <dbReference type="NCBI Taxonomy" id="205913"/>
    <lineage>
        <taxon>Bacteria</taxon>
        <taxon>Bacillati</taxon>
        <taxon>Actinomycetota</taxon>
        <taxon>Actinomycetes</taxon>
        <taxon>Bifidobacteriales</taxon>
        <taxon>Bifidobacteriaceae</taxon>
        <taxon>Bifidobacterium</taxon>
    </lineage>
</organism>
<dbReference type="EC" id="4.3.2.1" evidence="1"/>
<dbReference type="EMBL" id="CP000605">
    <property type="protein sequence ID" value="ACD98255.1"/>
    <property type="molecule type" value="Genomic_DNA"/>
</dbReference>
<dbReference type="RefSeq" id="WP_007051162.1">
    <property type="nucleotide sequence ID" value="NZ_AABM02000002.1"/>
</dbReference>
<dbReference type="SMR" id="B3DSY6"/>
<dbReference type="GeneID" id="69577802"/>
<dbReference type="KEGG" id="blj:BLD_0809"/>
<dbReference type="HOGENOM" id="CLU_027272_2_2_11"/>
<dbReference type="UniPathway" id="UPA00068">
    <property type="reaction ID" value="UER00114"/>
</dbReference>
<dbReference type="Proteomes" id="UP000002419">
    <property type="component" value="Chromosome"/>
</dbReference>
<dbReference type="GO" id="GO:0005829">
    <property type="term" value="C:cytosol"/>
    <property type="evidence" value="ECO:0007669"/>
    <property type="project" value="TreeGrafter"/>
</dbReference>
<dbReference type="GO" id="GO:0004056">
    <property type="term" value="F:argininosuccinate lyase activity"/>
    <property type="evidence" value="ECO:0007669"/>
    <property type="project" value="UniProtKB-UniRule"/>
</dbReference>
<dbReference type="GO" id="GO:0042450">
    <property type="term" value="P:arginine biosynthetic process via ornithine"/>
    <property type="evidence" value="ECO:0007669"/>
    <property type="project" value="InterPro"/>
</dbReference>
<dbReference type="GO" id="GO:0006526">
    <property type="term" value="P:L-arginine biosynthetic process"/>
    <property type="evidence" value="ECO:0007669"/>
    <property type="project" value="UniProtKB-UniRule"/>
</dbReference>
<dbReference type="CDD" id="cd01359">
    <property type="entry name" value="Argininosuccinate_lyase"/>
    <property type="match status" value="1"/>
</dbReference>
<dbReference type="FunFam" id="1.10.40.30:FF:000001">
    <property type="entry name" value="Argininosuccinate lyase"/>
    <property type="match status" value="1"/>
</dbReference>
<dbReference type="FunFam" id="1.20.200.10:FF:000015">
    <property type="entry name" value="argininosuccinate lyase isoform X2"/>
    <property type="match status" value="1"/>
</dbReference>
<dbReference type="Gene3D" id="1.10.40.30">
    <property type="entry name" value="Fumarase/aspartase (C-terminal domain)"/>
    <property type="match status" value="1"/>
</dbReference>
<dbReference type="Gene3D" id="1.20.200.10">
    <property type="entry name" value="Fumarase/aspartase (Central domain)"/>
    <property type="match status" value="1"/>
</dbReference>
<dbReference type="Gene3D" id="1.10.275.10">
    <property type="entry name" value="Fumarase/aspartase (N-terminal domain)"/>
    <property type="match status" value="1"/>
</dbReference>
<dbReference type="HAMAP" id="MF_00006">
    <property type="entry name" value="Arg_succ_lyase"/>
    <property type="match status" value="1"/>
</dbReference>
<dbReference type="InterPro" id="IPR029419">
    <property type="entry name" value="Arg_succ_lyase_C"/>
</dbReference>
<dbReference type="InterPro" id="IPR009049">
    <property type="entry name" value="Argininosuccinate_lyase"/>
</dbReference>
<dbReference type="InterPro" id="IPR024083">
    <property type="entry name" value="Fumarase/histidase_N"/>
</dbReference>
<dbReference type="InterPro" id="IPR020557">
    <property type="entry name" value="Fumarate_lyase_CS"/>
</dbReference>
<dbReference type="InterPro" id="IPR000362">
    <property type="entry name" value="Fumarate_lyase_fam"/>
</dbReference>
<dbReference type="InterPro" id="IPR022761">
    <property type="entry name" value="Fumarate_lyase_N"/>
</dbReference>
<dbReference type="InterPro" id="IPR008948">
    <property type="entry name" value="L-Aspartase-like"/>
</dbReference>
<dbReference type="NCBIfam" id="TIGR00838">
    <property type="entry name" value="argH"/>
    <property type="match status" value="1"/>
</dbReference>
<dbReference type="PANTHER" id="PTHR43814">
    <property type="entry name" value="ARGININOSUCCINATE LYASE"/>
    <property type="match status" value="1"/>
</dbReference>
<dbReference type="PANTHER" id="PTHR43814:SF1">
    <property type="entry name" value="ARGININOSUCCINATE LYASE"/>
    <property type="match status" value="1"/>
</dbReference>
<dbReference type="Pfam" id="PF14698">
    <property type="entry name" value="ASL_C2"/>
    <property type="match status" value="1"/>
</dbReference>
<dbReference type="Pfam" id="PF00206">
    <property type="entry name" value="Lyase_1"/>
    <property type="match status" value="1"/>
</dbReference>
<dbReference type="PRINTS" id="PR00145">
    <property type="entry name" value="ARGSUCLYASE"/>
</dbReference>
<dbReference type="PRINTS" id="PR00149">
    <property type="entry name" value="FUMRATELYASE"/>
</dbReference>
<dbReference type="SUPFAM" id="SSF48557">
    <property type="entry name" value="L-aspartase-like"/>
    <property type="match status" value="1"/>
</dbReference>
<dbReference type="PROSITE" id="PS00163">
    <property type="entry name" value="FUMARATE_LYASES"/>
    <property type="match status" value="1"/>
</dbReference>
<evidence type="ECO:0000255" key="1">
    <source>
        <dbReference type="HAMAP-Rule" id="MF_00006"/>
    </source>
</evidence>
<accession>B3DSY6</accession>
<protein>
    <recommendedName>
        <fullName evidence="1">Argininosuccinate lyase</fullName>
        <shortName evidence="1">ASAL</shortName>
        <ecNumber evidence="1">4.3.2.1</ecNumber>
    </recommendedName>
    <alternativeName>
        <fullName evidence="1">Arginosuccinase</fullName>
    </alternativeName>
</protein>
<proteinExistence type="inferred from homology"/>
<sequence length="490" mass="53392">MTENNEHLALWGGRFTSGPSPELARLSKSTQFDWRLADDDIAGSRAHARALGRAGLLTADELQRMEDALDTLQRHVDDGSFAPIEDDEDEATALERGLIDIAGDELGGKLRAGRSRNDQIACLIRMWLRRHSRVIAGLLLDLVNALIEQSEKAGRTVMPGRTHMQHAQPVLLAHQLMAHAWPLIRDVQRLIDWDKRINASPYGSGALAGNTLGLDPEAVARELGFSRVTDNSIDGTAARDLVAEFAFVAAMTGVDISRLSEEIIIWNTQEFAFVKLDDGYSTGSSIMPQKKNPDIAELARGKSGRLIGDLTGLLATLKGLPTAYARDLQEDKEAVFDQVDTLEVLLPAFTGMVRTMHFDGDRLEEEAPTGFALATDIAEWLVKNGVPFRHAHELSGACVKLAEGRGQELWDLTDNDFIETFAAFLPADKAPGVREVLSSHGSVDSRNGKGGTAYGRVREQIADAKAEVEELKLFPASTSDGSAYKAPGTF</sequence>
<keyword id="KW-0028">Amino-acid biosynthesis</keyword>
<keyword id="KW-0055">Arginine biosynthesis</keyword>
<keyword id="KW-0963">Cytoplasm</keyword>
<keyword id="KW-0456">Lyase</keyword>
<name>ARLY_BIFLD</name>
<gene>
    <name evidence="1" type="primary">argH</name>
    <name type="ordered locus">BLD_0809</name>
</gene>
<reference key="1">
    <citation type="journal article" date="2008" name="BMC Genomics">
        <title>Comparative genomic analysis of the gut bacterium Bifidobacterium longum reveals loci susceptible to deletion during pure culture growth.</title>
        <authorList>
            <person name="Lee J.H."/>
            <person name="Karamychev V.N."/>
            <person name="Kozyavkin S.A."/>
            <person name="Mills D."/>
            <person name="Pavlov A.R."/>
            <person name="Pavlova N.V."/>
            <person name="Polouchine N.N."/>
            <person name="Richardson P.M."/>
            <person name="Shakhova V.V."/>
            <person name="Slesarev A.I."/>
            <person name="Weimer B."/>
            <person name="O'Sullivan D.J."/>
        </authorList>
    </citation>
    <scope>NUCLEOTIDE SEQUENCE [LARGE SCALE GENOMIC DNA]</scope>
    <source>
        <strain>DJO10A</strain>
    </source>
</reference>
<feature type="chain" id="PRO_1000089067" description="Argininosuccinate lyase">
    <location>
        <begin position="1"/>
        <end position="490"/>
    </location>
</feature>